<gene>
    <name type="primary">wdr18</name>
</gene>
<comment type="function">
    <text evidence="3 5">Involved in left-right determination through controlling the correct clustering and migration of dorsal forerunner cells (DFCs) and Kupffer's vesicle formation (PubMed:21876750). Component of the PELP1 complex involved in the nucleolar steps of 28S rRNA maturation and the subsequent nucleoplasmic transit of the pre-60S ribosomal subunit (By similarity).</text>
</comment>
<comment type="subunit">
    <text evidence="3">Component of the PELP1 complex, composed of at least PELP1, TEX10 and WDR18. The complex interacts with pre-60S ribosome particles.</text>
</comment>
<comment type="subcellular location">
    <subcellularLocation>
        <location evidence="3">Nucleus</location>
        <location evidence="3">Nucleolus</location>
    </subcellularLocation>
    <subcellularLocation>
        <location evidence="2">Nucleus</location>
        <location evidence="2">Nucleoplasm</location>
    </subcellularLocation>
    <subcellularLocation>
        <location evidence="1">Dynein axonemal particle</location>
    </subcellularLocation>
</comment>
<comment type="developmental stage">
    <text evidence="5">Expressed from the 1-4 cell stage and in DFCs at 75%-epiboly stage. By the 6-somite stage, its expression in the Kupffer's vesicle is detectable in addition to some basal expression levels in other cells. Later at the 18-somite stage, detected ubiquitously throughout the embryo. After 2 dpf (days post fertilization), expressed in endodermal organs, including the pancreas and liver.</text>
</comment>
<comment type="disruption phenotype">
    <text evidence="5">Affects the left-right asymmetry of internal organs, but not their specification.</text>
</comment>
<comment type="similarity">
    <text evidence="6">Belongs to the WD repeat IPI3/WDR18 family.</text>
</comment>
<name>WDR18_DANRE</name>
<evidence type="ECO:0000250" key="1">
    <source>
        <dbReference type="UniProtKB" id="A0A1L8HX76"/>
    </source>
</evidence>
<evidence type="ECO:0000250" key="2">
    <source>
        <dbReference type="UniProtKB" id="Q4VBE8"/>
    </source>
</evidence>
<evidence type="ECO:0000250" key="3">
    <source>
        <dbReference type="UniProtKB" id="Q9BV38"/>
    </source>
</evidence>
<evidence type="ECO:0000256" key="4">
    <source>
        <dbReference type="SAM" id="MobiDB-lite"/>
    </source>
</evidence>
<evidence type="ECO:0000269" key="5">
    <source>
    </source>
</evidence>
<evidence type="ECO:0000305" key="6"/>
<organism>
    <name type="scientific">Danio rerio</name>
    <name type="common">Zebrafish</name>
    <name type="synonym">Brachydanio rerio</name>
    <dbReference type="NCBI Taxonomy" id="7955"/>
    <lineage>
        <taxon>Eukaryota</taxon>
        <taxon>Metazoa</taxon>
        <taxon>Chordata</taxon>
        <taxon>Craniata</taxon>
        <taxon>Vertebrata</taxon>
        <taxon>Euteleostomi</taxon>
        <taxon>Actinopterygii</taxon>
        <taxon>Neopterygii</taxon>
        <taxon>Teleostei</taxon>
        <taxon>Ostariophysi</taxon>
        <taxon>Cypriniformes</taxon>
        <taxon>Danionidae</taxon>
        <taxon>Danioninae</taxon>
        <taxon>Danio</taxon>
    </lineage>
</organism>
<proteinExistence type="evidence at transcript level"/>
<protein>
    <recommendedName>
        <fullName>WD repeat-containing protein 18</fullName>
    </recommendedName>
</protein>
<sequence>MSAPVEVVLSADSAGQLFNCAVYDPHTGSEFLSYRGGNTSSRSLTILNGEYILGAQLGKNYINVWEIQRKDQLQQKIVCPGIVTCLCASPDGLYVLAGIAEAIYLWEVSTGNLLAILSRHFQDLSCIKFTDDSSHFVSGGKDNLAFIWNLSSVVQLDSSRTPEPRHILSRHSLPITDIHCGLMGPQARVATASLDQTVKVWEISSGEMLLSVLFDVGIMSVTFDPCEYFLFCGGSDGNIFQVSLCSTSLSRDKTFQSDSEGNQVFKGHRNLVTCLSVSMDGTVLLSGSNDETVRMWDVQSKQCIWTINHRGPVTNAAIIPAPANMFLSDSHPAVPLPRFSRHLNPSEQGDGTGTGGMSLRLGANTQEPEGTYLEKAEELYSLMCAVTDKSVFGDGENTKVRVSELEEEVRTLKKINKDLYEFSTQLLTKPN</sequence>
<dbReference type="EMBL" id="BX640454">
    <property type="status" value="NOT_ANNOTATED_CDS"/>
    <property type="molecule type" value="Genomic_DNA"/>
</dbReference>
<dbReference type="EMBL" id="CR555295">
    <property type="status" value="NOT_ANNOTATED_CDS"/>
    <property type="molecule type" value="Genomic_DNA"/>
</dbReference>
<dbReference type="EMBL" id="BC080252">
    <property type="protein sequence ID" value="AAH80252.1"/>
    <property type="molecule type" value="mRNA"/>
</dbReference>
<dbReference type="RefSeq" id="NP_001005206.1">
    <property type="nucleotide sequence ID" value="NM_001005206.1"/>
</dbReference>
<dbReference type="SMR" id="Q68EI0"/>
<dbReference type="FunCoup" id="Q68EI0">
    <property type="interactions" value="2154"/>
</dbReference>
<dbReference type="STRING" id="7955.ENSDARP00000060250"/>
<dbReference type="PaxDb" id="7955-ENSDARP00000060250"/>
<dbReference type="Ensembl" id="ENSDART00000060251">
    <property type="protein sequence ID" value="ENSDARP00000060250"/>
    <property type="gene ID" value="ENSDARG00000041113"/>
</dbReference>
<dbReference type="GeneID" id="445819"/>
<dbReference type="KEGG" id="dre:445819"/>
<dbReference type="AGR" id="ZFIN:ZDB-GENE-040905-4"/>
<dbReference type="CTD" id="57418"/>
<dbReference type="ZFIN" id="ZDB-GENE-040905-4">
    <property type="gene designation" value="wdr18"/>
</dbReference>
<dbReference type="eggNOG" id="KOG0646">
    <property type="taxonomic scope" value="Eukaryota"/>
</dbReference>
<dbReference type="HOGENOM" id="CLU_029749_0_0_1"/>
<dbReference type="InParanoid" id="Q68EI0"/>
<dbReference type="OMA" id="GVNARIY"/>
<dbReference type="OrthoDB" id="756370at2759"/>
<dbReference type="PhylomeDB" id="Q68EI0"/>
<dbReference type="TreeFam" id="TF313046"/>
<dbReference type="PRO" id="PR:Q68EI0"/>
<dbReference type="Proteomes" id="UP000000437">
    <property type="component" value="Chromosome 11"/>
</dbReference>
<dbReference type="Bgee" id="ENSDARG00000041113">
    <property type="expression patterns" value="Expressed in blastula and 30 other cell types or tissues"/>
</dbReference>
<dbReference type="ExpressionAtlas" id="Q68EI0">
    <property type="expression patterns" value="baseline and differential"/>
</dbReference>
<dbReference type="GO" id="GO:0120293">
    <property type="term" value="C:dynein axonemal particle"/>
    <property type="evidence" value="ECO:0000250"/>
    <property type="project" value="UniProtKB"/>
</dbReference>
<dbReference type="GO" id="GO:0005656">
    <property type="term" value="C:nuclear pre-replicative complex"/>
    <property type="evidence" value="ECO:0000318"/>
    <property type="project" value="GO_Central"/>
</dbReference>
<dbReference type="GO" id="GO:0005730">
    <property type="term" value="C:nucleolus"/>
    <property type="evidence" value="ECO:0007669"/>
    <property type="project" value="UniProtKB-SubCell"/>
</dbReference>
<dbReference type="GO" id="GO:0120330">
    <property type="term" value="C:rixosome complex"/>
    <property type="evidence" value="ECO:0000318"/>
    <property type="project" value="GO_Central"/>
</dbReference>
<dbReference type="GO" id="GO:0007368">
    <property type="term" value="P:determination of left/right symmetry"/>
    <property type="evidence" value="ECO:0000315"/>
    <property type="project" value="UniProtKB"/>
</dbReference>
<dbReference type="GO" id="GO:0006261">
    <property type="term" value="P:DNA-templated DNA replication"/>
    <property type="evidence" value="ECO:0000318"/>
    <property type="project" value="GO_Central"/>
</dbReference>
<dbReference type="GO" id="GO:0070121">
    <property type="term" value="P:Kupffer's vesicle development"/>
    <property type="evidence" value="ECO:0000315"/>
    <property type="project" value="UniProtKB"/>
</dbReference>
<dbReference type="GO" id="GO:0006364">
    <property type="term" value="P:rRNA processing"/>
    <property type="evidence" value="ECO:0000318"/>
    <property type="project" value="GO_Central"/>
</dbReference>
<dbReference type="FunFam" id="2.130.10.10:FF:000420">
    <property type="entry name" value="WD repeat-containing protein 18"/>
    <property type="match status" value="1"/>
</dbReference>
<dbReference type="FunFam" id="2.130.10.10:FF:000702">
    <property type="entry name" value="WD repeat-containing protein 18"/>
    <property type="match status" value="1"/>
</dbReference>
<dbReference type="Gene3D" id="2.130.10.10">
    <property type="entry name" value="YVTN repeat-like/Quinoprotein amine dehydrogenase"/>
    <property type="match status" value="2"/>
</dbReference>
<dbReference type="InterPro" id="IPR020472">
    <property type="entry name" value="G-protein_beta_WD-40_rep"/>
</dbReference>
<dbReference type="InterPro" id="IPR011047">
    <property type="entry name" value="Quinoprotein_ADH-like_sf"/>
</dbReference>
<dbReference type="InterPro" id="IPR015943">
    <property type="entry name" value="WD40/YVTN_repeat-like_dom_sf"/>
</dbReference>
<dbReference type="InterPro" id="IPR019775">
    <property type="entry name" value="WD40_repeat_CS"/>
</dbReference>
<dbReference type="InterPro" id="IPR001680">
    <property type="entry name" value="WD40_rpt"/>
</dbReference>
<dbReference type="InterPro" id="IPR045227">
    <property type="entry name" value="WDR18/Ipi3/RID3"/>
</dbReference>
<dbReference type="InterPro" id="IPR026987">
    <property type="entry name" value="Wdr18_C_dom"/>
</dbReference>
<dbReference type="PANTHER" id="PTHR18763:SF0">
    <property type="entry name" value="WD REPEAT-CONTAINING PROTEIN 18"/>
    <property type="match status" value="1"/>
</dbReference>
<dbReference type="PANTHER" id="PTHR18763">
    <property type="entry name" value="WD-REPEAT PROTEIN 18"/>
    <property type="match status" value="1"/>
</dbReference>
<dbReference type="Pfam" id="PF00400">
    <property type="entry name" value="WD40"/>
    <property type="match status" value="4"/>
</dbReference>
<dbReference type="Pfam" id="PF14077">
    <property type="entry name" value="WD40_alt"/>
    <property type="match status" value="1"/>
</dbReference>
<dbReference type="PRINTS" id="PR00320">
    <property type="entry name" value="GPROTEINBRPT"/>
</dbReference>
<dbReference type="SMART" id="SM00320">
    <property type="entry name" value="WD40"/>
    <property type="match status" value="5"/>
</dbReference>
<dbReference type="SUPFAM" id="SSF50998">
    <property type="entry name" value="Quinoprotein alcohol dehydrogenase-like"/>
    <property type="match status" value="1"/>
</dbReference>
<dbReference type="PROSITE" id="PS00678">
    <property type="entry name" value="WD_REPEATS_1"/>
    <property type="match status" value="2"/>
</dbReference>
<dbReference type="PROSITE" id="PS50082">
    <property type="entry name" value="WD_REPEATS_2"/>
    <property type="match status" value="3"/>
</dbReference>
<dbReference type="PROSITE" id="PS50294">
    <property type="entry name" value="WD_REPEATS_REGION"/>
    <property type="match status" value="1"/>
</dbReference>
<reference key="1">
    <citation type="journal article" date="2013" name="Nature">
        <title>The zebrafish reference genome sequence and its relationship to the human genome.</title>
        <authorList>
            <person name="Howe K."/>
            <person name="Clark M.D."/>
            <person name="Torroja C.F."/>
            <person name="Torrance J."/>
            <person name="Berthelot C."/>
            <person name="Muffato M."/>
            <person name="Collins J.E."/>
            <person name="Humphray S."/>
            <person name="McLaren K."/>
            <person name="Matthews L."/>
            <person name="McLaren S."/>
            <person name="Sealy I."/>
            <person name="Caccamo M."/>
            <person name="Churcher C."/>
            <person name="Scott C."/>
            <person name="Barrett J.C."/>
            <person name="Koch R."/>
            <person name="Rauch G.J."/>
            <person name="White S."/>
            <person name="Chow W."/>
            <person name="Kilian B."/>
            <person name="Quintais L.T."/>
            <person name="Guerra-Assuncao J.A."/>
            <person name="Zhou Y."/>
            <person name="Gu Y."/>
            <person name="Yen J."/>
            <person name="Vogel J.H."/>
            <person name="Eyre T."/>
            <person name="Redmond S."/>
            <person name="Banerjee R."/>
            <person name="Chi J."/>
            <person name="Fu B."/>
            <person name="Langley E."/>
            <person name="Maguire S.F."/>
            <person name="Laird G.K."/>
            <person name="Lloyd D."/>
            <person name="Kenyon E."/>
            <person name="Donaldson S."/>
            <person name="Sehra H."/>
            <person name="Almeida-King J."/>
            <person name="Loveland J."/>
            <person name="Trevanion S."/>
            <person name="Jones M."/>
            <person name="Quail M."/>
            <person name="Willey D."/>
            <person name="Hunt A."/>
            <person name="Burton J."/>
            <person name="Sims S."/>
            <person name="McLay K."/>
            <person name="Plumb B."/>
            <person name="Davis J."/>
            <person name="Clee C."/>
            <person name="Oliver K."/>
            <person name="Clark R."/>
            <person name="Riddle C."/>
            <person name="Elliot D."/>
            <person name="Threadgold G."/>
            <person name="Harden G."/>
            <person name="Ware D."/>
            <person name="Begum S."/>
            <person name="Mortimore B."/>
            <person name="Kerry G."/>
            <person name="Heath P."/>
            <person name="Phillimore B."/>
            <person name="Tracey A."/>
            <person name="Corby N."/>
            <person name="Dunn M."/>
            <person name="Johnson C."/>
            <person name="Wood J."/>
            <person name="Clark S."/>
            <person name="Pelan S."/>
            <person name="Griffiths G."/>
            <person name="Smith M."/>
            <person name="Glithero R."/>
            <person name="Howden P."/>
            <person name="Barker N."/>
            <person name="Lloyd C."/>
            <person name="Stevens C."/>
            <person name="Harley J."/>
            <person name="Holt K."/>
            <person name="Panagiotidis G."/>
            <person name="Lovell J."/>
            <person name="Beasley H."/>
            <person name="Henderson C."/>
            <person name="Gordon D."/>
            <person name="Auger K."/>
            <person name="Wright D."/>
            <person name="Collins J."/>
            <person name="Raisen C."/>
            <person name="Dyer L."/>
            <person name="Leung K."/>
            <person name="Robertson L."/>
            <person name="Ambridge K."/>
            <person name="Leongamornlert D."/>
            <person name="McGuire S."/>
            <person name="Gilderthorp R."/>
            <person name="Griffiths C."/>
            <person name="Manthravadi D."/>
            <person name="Nichol S."/>
            <person name="Barker G."/>
            <person name="Whitehead S."/>
            <person name="Kay M."/>
            <person name="Brown J."/>
            <person name="Murnane C."/>
            <person name="Gray E."/>
            <person name="Humphries M."/>
            <person name="Sycamore N."/>
            <person name="Barker D."/>
            <person name="Saunders D."/>
            <person name="Wallis J."/>
            <person name="Babbage A."/>
            <person name="Hammond S."/>
            <person name="Mashreghi-Mohammadi M."/>
            <person name="Barr L."/>
            <person name="Martin S."/>
            <person name="Wray P."/>
            <person name="Ellington A."/>
            <person name="Matthews N."/>
            <person name="Ellwood M."/>
            <person name="Woodmansey R."/>
            <person name="Clark G."/>
            <person name="Cooper J."/>
            <person name="Tromans A."/>
            <person name="Grafham D."/>
            <person name="Skuce C."/>
            <person name="Pandian R."/>
            <person name="Andrews R."/>
            <person name="Harrison E."/>
            <person name="Kimberley A."/>
            <person name="Garnett J."/>
            <person name="Fosker N."/>
            <person name="Hall R."/>
            <person name="Garner P."/>
            <person name="Kelly D."/>
            <person name="Bird C."/>
            <person name="Palmer S."/>
            <person name="Gehring I."/>
            <person name="Berger A."/>
            <person name="Dooley C.M."/>
            <person name="Ersan-Urun Z."/>
            <person name="Eser C."/>
            <person name="Geiger H."/>
            <person name="Geisler M."/>
            <person name="Karotki L."/>
            <person name="Kirn A."/>
            <person name="Konantz J."/>
            <person name="Konantz M."/>
            <person name="Oberlander M."/>
            <person name="Rudolph-Geiger S."/>
            <person name="Teucke M."/>
            <person name="Lanz C."/>
            <person name="Raddatz G."/>
            <person name="Osoegawa K."/>
            <person name="Zhu B."/>
            <person name="Rapp A."/>
            <person name="Widaa S."/>
            <person name="Langford C."/>
            <person name="Yang F."/>
            <person name="Schuster S.C."/>
            <person name="Carter N.P."/>
            <person name="Harrow J."/>
            <person name="Ning Z."/>
            <person name="Herrero J."/>
            <person name="Searle S.M."/>
            <person name="Enright A."/>
            <person name="Geisler R."/>
            <person name="Plasterk R.H."/>
            <person name="Lee C."/>
            <person name="Westerfield M."/>
            <person name="de Jong P.J."/>
            <person name="Zon L.I."/>
            <person name="Postlethwait J.H."/>
            <person name="Nusslein-Volhard C."/>
            <person name="Hubbard T.J."/>
            <person name="Roest Crollius H."/>
            <person name="Rogers J."/>
            <person name="Stemple D.L."/>
        </authorList>
    </citation>
    <scope>NUCLEOTIDE SEQUENCE [LARGE SCALE GENOMIC DNA]</scope>
    <source>
        <strain>Tuebingen</strain>
    </source>
</reference>
<reference key="2">
    <citation type="submission" date="2004-08" db="EMBL/GenBank/DDBJ databases">
        <authorList>
            <consortium name="NIH - Zebrafish Gene Collection (ZGC) project"/>
        </authorList>
    </citation>
    <scope>NUCLEOTIDE SEQUENCE [LARGE SCALE MRNA]</scope>
</reference>
<reference key="3">
    <citation type="journal article" date="2011" name="PLoS ONE">
        <title>Wdr18 is required for Kupffer's vesicle formation and regulation of body asymmetry in zebrafish.</title>
        <authorList>
            <person name="Gao W."/>
            <person name="Xu L."/>
            <person name="Guan R."/>
            <person name="Liu X."/>
            <person name="Han Y."/>
            <person name="Wu Q."/>
            <person name="Xiao Y."/>
            <person name="Qi F."/>
            <person name="Zhu Z."/>
            <person name="Lin S."/>
            <person name="Zhang B."/>
        </authorList>
    </citation>
    <scope>FUNCTION</scope>
    <scope>DEVELOPMENTAL STAGE</scope>
    <scope>DISRUPTION PHENOTYPE</scope>
</reference>
<keyword id="KW-0963">Cytoplasm</keyword>
<keyword id="KW-0217">Developmental protein</keyword>
<keyword id="KW-0539">Nucleus</keyword>
<keyword id="KW-1185">Reference proteome</keyword>
<keyword id="KW-0677">Repeat</keyword>
<keyword id="KW-0853">WD repeat</keyword>
<accession>Q68EI0</accession>
<feature type="chain" id="PRO_0000413755" description="WD repeat-containing protein 18">
    <location>
        <begin position="1"/>
        <end position="431"/>
    </location>
</feature>
<feature type="repeat" description="WD 1">
    <location>
        <begin position="78"/>
        <end position="118"/>
    </location>
</feature>
<feature type="repeat" description="WD 2">
    <location>
        <begin position="119"/>
        <end position="158"/>
    </location>
</feature>
<feature type="repeat" description="WD 3">
    <location>
        <begin position="170"/>
        <end position="211"/>
    </location>
</feature>
<feature type="repeat" description="WD 4">
    <location>
        <begin position="213"/>
        <end position="252"/>
    </location>
</feature>
<feature type="repeat" description="WD 5">
    <location>
        <begin position="267"/>
        <end position="306"/>
    </location>
</feature>
<feature type="region of interest" description="Disordered" evidence="4">
    <location>
        <begin position="342"/>
        <end position="363"/>
    </location>
</feature>